<organism>
    <name type="scientific">Alkaliphilus oremlandii (strain OhILAs)</name>
    <name type="common">Clostridium oremlandii (strain OhILAs)</name>
    <dbReference type="NCBI Taxonomy" id="350688"/>
    <lineage>
        <taxon>Bacteria</taxon>
        <taxon>Bacillati</taxon>
        <taxon>Bacillota</taxon>
        <taxon>Clostridia</taxon>
        <taxon>Peptostreptococcales</taxon>
        <taxon>Natronincolaceae</taxon>
        <taxon>Alkaliphilus</taxon>
    </lineage>
</organism>
<comment type="function">
    <text evidence="1">Nucleoside triphosphate pyrophosphatase that hydrolyzes dTTP and UTP. May have a dual role in cell division arrest and in preventing the incorporation of modified nucleotides into cellular nucleic acids.</text>
</comment>
<comment type="catalytic activity">
    <reaction evidence="1">
        <text>dTTP + H2O = dTMP + diphosphate + H(+)</text>
        <dbReference type="Rhea" id="RHEA:28534"/>
        <dbReference type="ChEBI" id="CHEBI:15377"/>
        <dbReference type="ChEBI" id="CHEBI:15378"/>
        <dbReference type="ChEBI" id="CHEBI:33019"/>
        <dbReference type="ChEBI" id="CHEBI:37568"/>
        <dbReference type="ChEBI" id="CHEBI:63528"/>
        <dbReference type="EC" id="3.6.1.9"/>
    </reaction>
</comment>
<comment type="catalytic activity">
    <reaction evidence="1">
        <text>UTP + H2O = UMP + diphosphate + H(+)</text>
        <dbReference type="Rhea" id="RHEA:29395"/>
        <dbReference type="ChEBI" id="CHEBI:15377"/>
        <dbReference type="ChEBI" id="CHEBI:15378"/>
        <dbReference type="ChEBI" id="CHEBI:33019"/>
        <dbReference type="ChEBI" id="CHEBI:46398"/>
        <dbReference type="ChEBI" id="CHEBI:57865"/>
        <dbReference type="EC" id="3.6.1.9"/>
    </reaction>
</comment>
<comment type="cofactor">
    <cofactor evidence="1">
        <name>a divalent metal cation</name>
        <dbReference type="ChEBI" id="CHEBI:60240"/>
    </cofactor>
</comment>
<comment type="subcellular location">
    <subcellularLocation>
        <location evidence="1">Cytoplasm</location>
    </subcellularLocation>
</comment>
<comment type="similarity">
    <text evidence="1">Belongs to the Maf family. YhdE subfamily.</text>
</comment>
<reference key="1">
    <citation type="submission" date="2007-10" db="EMBL/GenBank/DDBJ databases">
        <title>Complete genome of Alkaliphilus oremlandii OhILAs.</title>
        <authorList>
            <person name="Copeland A."/>
            <person name="Lucas S."/>
            <person name="Lapidus A."/>
            <person name="Barry K."/>
            <person name="Detter J.C."/>
            <person name="Glavina del Rio T."/>
            <person name="Hammon N."/>
            <person name="Israni S."/>
            <person name="Dalin E."/>
            <person name="Tice H."/>
            <person name="Pitluck S."/>
            <person name="Chain P."/>
            <person name="Malfatti S."/>
            <person name="Shin M."/>
            <person name="Vergez L."/>
            <person name="Schmutz J."/>
            <person name="Larimer F."/>
            <person name="Land M."/>
            <person name="Hauser L."/>
            <person name="Kyrpides N."/>
            <person name="Mikhailova N."/>
            <person name="Stolz J.F."/>
            <person name="Dawson A."/>
            <person name="Fisher E."/>
            <person name="Crable B."/>
            <person name="Perera E."/>
            <person name="Lisak J."/>
            <person name="Ranganathan M."/>
            <person name="Basu P."/>
            <person name="Richardson P."/>
        </authorList>
    </citation>
    <scope>NUCLEOTIDE SEQUENCE [LARGE SCALE GENOMIC DNA]</scope>
    <source>
        <strain>OhILAs</strain>
    </source>
</reference>
<evidence type="ECO:0000255" key="1">
    <source>
        <dbReference type="HAMAP-Rule" id="MF_00528"/>
    </source>
</evidence>
<sequence length="192" mass="21616">MKQMILASASPRRRELLQGLGVPFEVMSSDIEEKINTELSAPEIAKELAYQKAKDVSNKLDGDYIVIGADTIVEYNRILGKPKDADEAYQMLKLLSGKIHRVITGFAVIDCRTKKEIVDFEVTNVYFNHLSDEEINRYIETKEPMDKAGAYGIQGKASLFVSKIEGDYFNVVGLPIFKLGVVLRNHFDINLL</sequence>
<accession>A8MHM5</accession>
<protein>
    <recommendedName>
        <fullName evidence="1">dTTP/UTP pyrophosphatase</fullName>
        <shortName evidence="1">dTTPase/UTPase</shortName>
        <ecNumber evidence="1">3.6.1.9</ecNumber>
    </recommendedName>
    <alternativeName>
        <fullName evidence="1">Nucleoside triphosphate pyrophosphatase</fullName>
    </alternativeName>
    <alternativeName>
        <fullName evidence="1">Nucleotide pyrophosphatase</fullName>
        <shortName evidence="1">Nucleotide PPase</shortName>
    </alternativeName>
</protein>
<proteinExistence type="inferred from homology"/>
<name>NTPPA_ALKOO</name>
<gene>
    <name type="ordered locus">Clos_1767</name>
</gene>
<feature type="chain" id="PRO_1000081708" description="dTTP/UTP pyrophosphatase">
    <location>
        <begin position="1"/>
        <end position="192"/>
    </location>
</feature>
<feature type="active site" description="Proton acceptor" evidence="1">
    <location>
        <position position="70"/>
    </location>
</feature>
<feature type="site" description="Important for substrate specificity" evidence="1">
    <location>
        <position position="12"/>
    </location>
</feature>
<feature type="site" description="Important for substrate specificity" evidence="1">
    <location>
        <position position="71"/>
    </location>
</feature>
<feature type="site" description="Important for substrate specificity" evidence="1">
    <location>
        <position position="154"/>
    </location>
</feature>
<dbReference type="EC" id="3.6.1.9" evidence="1"/>
<dbReference type="EMBL" id="CP000853">
    <property type="protein sequence ID" value="ABW19307.1"/>
    <property type="molecule type" value="Genomic_DNA"/>
</dbReference>
<dbReference type="RefSeq" id="WP_012159619.1">
    <property type="nucleotide sequence ID" value="NC_009922.1"/>
</dbReference>
<dbReference type="SMR" id="A8MHM5"/>
<dbReference type="STRING" id="350688.Clos_1767"/>
<dbReference type="KEGG" id="aoe:Clos_1767"/>
<dbReference type="eggNOG" id="COG0424">
    <property type="taxonomic scope" value="Bacteria"/>
</dbReference>
<dbReference type="HOGENOM" id="CLU_040416_0_0_9"/>
<dbReference type="OrthoDB" id="9807767at2"/>
<dbReference type="Proteomes" id="UP000000269">
    <property type="component" value="Chromosome"/>
</dbReference>
<dbReference type="GO" id="GO:0005737">
    <property type="term" value="C:cytoplasm"/>
    <property type="evidence" value="ECO:0007669"/>
    <property type="project" value="UniProtKB-SubCell"/>
</dbReference>
<dbReference type="GO" id="GO:0036218">
    <property type="term" value="F:dTTP diphosphatase activity"/>
    <property type="evidence" value="ECO:0007669"/>
    <property type="project" value="RHEA"/>
</dbReference>
<dbReference type="GO" id="GO:0036221">
    <property type="term" value="F:UTP diphosphatase activity"/>
    <property type="evidence" value="ECO:0007669"/>
    <property type="project" value="RHEA"/>
</dbReference>
<dbReference type="GO" id="GO:0009117">
    <property type="term" value="P:nucleotide metabolic process"/>
    <property type="evidence" value="ECO:0007669"/>
    <property type="project" value="UniProtKB-KW"/>
</dbReference>
<dbReference type="CDD" id="cd00555">
    <property type="entry name" value="Maf"/>
    <property type="match status" value="1"/>
</dbReference>
<dbReference type="Gene3D" id="3.90.950.10">
    <property type="match status" value="1"/>
</dbReference>
<dbReference type="HAMAP" id="MF_00528">
    <property type="entry name" value="Maf"/>
    <property type="match status" value="1"/>
</dbReference>
<dbReference type="InterPro" id="IPR029001">
    <property type="entry name" value="ITPase-like_fam"/>
</dbReference>
<dbReference type="InterPro" id="IPR003697">
    <property type="entry name" value="Maf-like"/>
</dbReference>
<dbReference type="NCBIfam" id="TIGR00172">
    <property type="entry name" value="maf"/>
    <property type="match status" value="1"/>
</dbReference>
<dbReference type="PANTHER" id="PTHR43213">
    <property type="entry name" value="BIFUNCTIONAL DTTP/UTP PYROPHOSPHATASE/METHYLTRANSFERASE PROTEIN-RELATED"/>
    <property type="match status" value="1"/>
</dbReference>
<dbReference type="PANTHER" id="PTHR43213:SF5">
    <property type="entry name" value="BIFUNCTIONAL DTTP_UTP PYROPHOSPHATASE_METHYLTRANSFERASE PROTEIN-RELATED"/>
    <property type="match status" value="1"/>
</dbReference>
<dbReference type="Pfam" id="PF02545">
    <property type="entry name" value="Maf"/>
    <property type="match status" value="1"/>
</dbReference>
<dbReference type="PIRSF" id="PIRSF006305">
    <property type="entry name" value="Maf"/>
    <property type="match status" value="1"/>
</dbReference>
<dbReference type="SUPFAM" id="SSF52972">
    <property type="entry name" value="ITPase-like"/>
    <property type="match status" value="1"/>
</dbReference>
<keyword id="KW-0963">Cytoplasm</keyword>
<keyword id="KW-0378">Hydrolase</keyword>
<keyword id="KW-0546">Nucleotide metabolism</keyword>
<keyword id="KW-1185">Reference proteome</keyword>